<comment type="function">
    <text evidence="1">Major role in the synthesis of nucleoside triphosphates other than ATP. The ATP gamma phosphate is transferred to the NDP beta phosphate via a ping-pong mechanism, using a phosphorylated active-site intermediate.</text>
</comment>
<comment type="catalytic activity">
    <reaction evidence="1">
        <text>a 2'-deoxyribonucleoside 5'-diphosphate + ATP = a 2'-deoxyribonucleoside 5'-triphosphate + ADP</text>
        <dbReference type="Rhea" id="RHEA:44640"/>
        <dbReference type="ChEBI" id="CHEBI:30616"/>
        <dbReference type="ChEBI" id="CHEBI:61560"/>
        <dbReference type="ChEBI" id="CHEBI:73316"/>
        <dbReference type="ChEBI" id="CHEBI:456216"/>
        <dbReference type="EC" id="2.7.4.6"/>
    </reaction>
</comment>
<comment type="catalytic activity">
    <reaction evidence="1">
        <text>a ribonucleoside 5'-diphosphate + ATP = a ribonucleoside 5'-triphosphate + ADP</text>
        <dbReference type="Rhea" id="RHEA:18113"/>
        <dbReference type="ChEBI" id="CHEBI:30616"/>
        <dbReference type="ChEBI" id="CHEBI:57930"/>
        <dbReference type="ChEBI" id="CHEBI:61557"/>
        <dbReference type="ChEBI" id="CHEBI:456216"/>
        <dbReference type="EC" id="2.7.4.6"/>
    </reaction>
</comment>
<comment type="cofactor">
    <cofactor evidence="1">
        <name>Mg(2+)</name>
        <dbReference type="ChEBI" id="CHEBI:18420"/>
    </cofactor>
</comment>
<comment type="subunit">
    <text evidence="1">Homotetramer.</text>
</comment>
<comment type="subcellular location">
    <subcellularLocation>
        <location evidence="1">Cytoplasm</location>
    </subcellularLocation>
</comment>
<comment type="similarity">
    <text evidence="1">Belongs to the NDK family.</text>
</comment>
<accession>Q1AVT4</accession>
<name>NDK_RUBXD</name>
<evidence type="ECO:0000255" key="1">
    <source>
        <dbReference type="HAMAP-Rule" id="MF_00451"/>
    </source>
</evidence>
<reference key="1">
    <citation type="submission" date="2006-06" db="EMBL/GenBank/DDBJ databases">
        <title>Complete sequence of Rubrobacter xylanophilus DSM 9941.</title>
        <authorList>
            <consortium name="US DOE Joint Genome Institute"/>
            <person name="Copeland A."/>
            <person name="Lucas S."/>
            <person name="Lapidus A."/>
            <person name="Barry K."/>
            <person name="Detter J.C."/>
            <person name="Glavina del Rio T."/>
            <person name="Hammon N."/>
            <person name="Israni S."/>
            <person name="Dalin E."/>
            <person name="Tice H."/>
            <person name="Pitluck S."/>
            <person name="Munk A.C."/>
            <person name="Brettin T."/>
            <person name="Bruce D."/>
            <person name="Han C."/>
            <person name="Tapia R."/>
            <person name="Gilna P."/>
            <person name="Schmutz J."/>
            <person name="Larimer F."/>
            <person name="Land M."/>
            <person name="Hauser L."/>
            <person name="Kyrpides N."/>
            <person name="Lykidis A."/>
            <person name="da Costa M.S."/>
            <person name="Rainey F.A."/>
            <person name="Empadinhas N."/>
            <person name="Jolivet E."/>
            <person name="Battista J.R."/>
            <person name="Richardson P."/>
        </authorList>
    </citation>
    <scope>NUCLEOTIDE SEQUENCE [LARGE SCALE GENOMIC DNA]</scope>
    <source>
        <strain>DSM 9941 / JCM 11954 / NBRC 16129 / PRD-1</strain>
    </source>
</reference>
<feature type="chain" id="PRO_0000267799" description="Nucleoside diphosphate kinase">
    <location>
        <begin position="1"/>
        <end position="133"/>
    </location>
</feature>
<feature type="active site" description="Pros-phosphohistidine intermediate" evidence="1">
    <location>
        <position position="115"/>
    </location>
</feature>
<feature type="binding site" evidence="1">
    <location>
        <position position="9"/>
    </location>
    <ligand>
        <name>ATP</name>
        <dbReference type="ChEBI" id="CHEBI:30616"/>
    </ligand>
</feature>
<feature type="binding site" evidence="1">
    <location>
        <position position="57"/>
    </location>
    <ligand>
        <name>ATP</name>
        <dbReference type="ChEBI" id="CHEBI:30616"/>
    </ligand>
</feature>
<feature type="binding site" evidence="1">
    <location>
        <position position="85"/>
    </location>
    <ligand>
        <name>ATP</name>
        <dbReference type="ChEBI" id="CHEBI:30616"/>
    </ligand>
</feature>
<feature type="binding site" evidence="1">
    <location>
        <position position="91"/>
    </location>
    <ligand>
        <name>ATP</name>
        <dbReference type="ChEBI" id="CHEBI:30616"/>
    </ligand>
</feature>
<feature type="binding site" evidence="1">
    <location>
        <position position="102"/>
    </location>
    <ligand>
        <name>ATP</name>
        <dbReference type="ChEBI" id="CHEBI:30616"/>
    </ligand>
</feature>
<feature type="binding site" evidence="1">
    <location>
        <position position="112"/>
    </location>
    <ligand>
        <name>ATP</name>
        <dbReference type="ChEBI" id="CHEBI:30616"/>
    </ligand>
</feature>
<keyword id="KW-0067">ATP-binding</keyword>
<keyword id="KW-0963">Cytoplasm</keyword>
<keyword id="KW-0418">Kinase</keyword>
<keyword id="KW-0460">Magnesium</keyword>
<keyword id="KW-0479">Metal-binding</keyword>
<keyword id="KW-0546">Nucleotide metabolism</keyword>
<keyword id="KW-0547">Nucleotide-binding</keyword>
<keyword id="KW-0597">Phosphoprotein</keyword>
<keyword id="KW-1185">Reference proteome</keyword>
<keyword id="KW-0808">Transferase</keyword>
<gene>
    <name evidence="1" type="primary">ndk</name>
    <name type="ordered locus">Rxyl_1532</name>
</gene>
<sequence length="133" mass="14624">MEQTLVLIKGDGVRRRLIGEIIRRLENKGLAIRDLKMMRVSRELAEEHYAEHREKPFFGELVEFITSAPVVAMRVEGEGAIGVVRNLMGATDPAKAAPGTIRGDLALSMPDNLVHGSDSPQSAARELRLFFGG</sequence>
<dbReference type="EC" id="2.7.4.6" evidence="1"/>
<dbReference type="EMBL" id="CP000386">
    <property type="protein sequence ID" value="ABG04494.1"/>
    <property type="molecule type" value="Genomic_DNA"/>
</dbReference>
<dbReference type="RefSeq" id="WP_011564511.1">
    <property type="nucleotide sequence ID" value="NC_008148.1"/>
</dbReference>
<dbReference type="SMR" id="Q1AVT4"/>
<dbReference type="STRING" id="266117.Rxyl_1532"/>
<dbReference type="KEGG" id="rxy:Rxyl_1532"/>
<dbReference type="eggNOG" id="COG0105">
    <property type="taxonomic scope" value="Bacteria"/>
</dbReference>
<dbReference type="HOGENOM" id="CLU_060216_6_3_11"/>
<dbReference type="OrthoDB" id="9801161at2"/>
<dbReference type="PhylomeDB" id="Q1AVT4"/>
<dbReference type="Proteomes" id="UP000006637">
    <property type="component" value="Chromosome"/>
</dbReference>
<dbReference type="GO" id="GO:0005737">
    <property type="term" value="C:cytoplasm"/>
    <property type="evidence" value="ECO:0007669"/>
    <property type="project" value="UniProtKB-SubCell"/>
</dbReference>
<dbReference type="GO" id="GO:0005524">
    <property type="term" value="F:ATP binding"/>
    <property type="evidence" value="ECO:0007669"/>
    <property type="project" value="UniProtKB-UniRule"/>
</dbReference>
<dbReference type="GO" id="GO:0046872">
    <property type="term" value="F:metal ion binding"/>
    <property type="evidence" value="ECO:0007669"/>
    <property type="project" value="UniProtKB-KW"/>
</dbReference>
<dbReference type="GO" id="GO:0004550">
    <property type="term" value="F:nucleoside diphosphate kinase activity"/>
    <property type="evidence" value="ECO:0007669"/>
    <property type="project" value="UniProtKB-UniRule"/>
</dbReference>
<dbReference type="GO" id="GO:0006241">
    <property type="term" value="P:CTP biosynthetic process"/>
    <property type="evidence" value="ECO:0007669"/>
    <property type="project" value="UniProtKB-UniRule"/>
</dbReference>
<dbReference type="GO" id="GO:0006183">
    <property type="term" value="P:GTP biosynthetic process"/>
    <property type="evidence" value="ECO:0007669"/>
    <property type="project" value="UniProtKB-UniRule"/>
</dbReference>
<dbReference type="GO" id="GO:0006228">
    <property type="term" value="P:UTP biosynthetic process"/>
    <property type="evidence" value="ECO:0007669"/>
    <property type="project" value="UniProtKB-UniRule"/>
</dbReference>
<dbReference type="CDD" id="cd04413">
    <property type="entry name" value="NDPk_I"/>
    <property type="match status" value="1"/>
</dbReference>
<dbReference type="FunFam" id="3.30.70.141:FF:000003">
    <property type="entry name" value="Nucleoside diphosphate kinase"/>
    <property type="match status" value="1"/>
</dbReference>
<dbReference type="Gene3D" id="3.30.70.141">
    <property type="entry name" value="Nucleoside diphosphate kinase-like domain"/>
    <property type="match status" value="1"/>
</dbReference>
<dbReference type="HAMAP" id="MF_00451">
    <property type="entry name" value="NDP_kinase"/>
    <property type="match status" value="1"/>
</dbReference>
<dbReference type="InterPro" id="IPR034907">
    <property type="entry name" value="NDK-like_dom"/>
</dbReference>
<dbReference type="InterPro" id="IPR036850">
    <property type="entry name" value="NDK-like_dom_sf"/>
</dbReference>
<dbReference type="InterPro" id="IPR001564">
    <property type="entry name" value="Nucleoside_diP_kinase"/>
</dbReference>
<dbReference type="InterPro" id="IPR023005">
    <property type="entry name" value="Nucleoside_diP_kinase_AS"/>
</dbReference>
<dbReference type="NCBIfam" id="NF001908">
    <property type="entry name" value="PRK00668.1"/>
    <property type="match status" value="1"/>
</dbReference>
<dbReference type="PANTHER" id="PTHR11349">
    <property type="entry name" value="NUCLEOSIDE DIPHOSPHATE KINASE"/>
    <property type="match status" value="1"/>
</dbReference>
<dbReference type="Pfam" id="PF00334">
    <property type="entry name" value="NDK"/>
    <property type="match status" value="1"/>
</dbReference>
<dbReference type="PRINTS" id="PR01243">
    <property type="entry name" value="NUCDPKINASE"/>
</dbReference>
<dbReference type="SMART" id="SM00562">
    <property type="entry name" value="NDK"/>
    <property type="match status" value="1"/>
</dbReference>
<dbReference type="SUPFAM" id="SSF54919">
    <property type="entry name" value="Nucleoside diphosphate kinase, NDK"/>
    <property type="match status" value="1"/>
</dbReference>
<dbReference type="PROSITE" id="PS00469">
    <property type="entry name" value="NDPK"/>
    <property type="match status" value="1"/>
</dbReference>
<dbReference type="PROSITE" id="PS51374">
    <property type="entry name" value="NDPK_LIKE"/>
    <property type="match status" value="1"/>
</dbReference>
<proteinExistence type="inferred from homology"/>
<organism>
    <name type="scientific">Rubrobacter xylanophilus (strain DSM 9941 / JCM 11954 / NBRC 16129 / PRD-1)</name>
    <dbReference type="NCBI Taxonomy" id="266117"/>
    <lineage>
        <taxon>Bacteria</taxon>
        <taxon>Bacillati</taxon>
        <taxon>Actinomycetota</taxon>
        <taxon>Rubrobacteria</taxon>
        <taxon>Rubrobacterales</taxon>
        <taxon>Rubrobacteraceae</taxon>
        <taxon>Rubrobacter</taxon>
    </lineage>
</organism>
<protein>
    <recommendedName>
        <fullName evidence="1">Nucleoside diphosphate kinase</fullName>
        <shortName evidence="1">NDK</shortName>
        <shortName evidence="1">NDP kinase</shortName>
        <ecNumber evidence="1">2.7.4.6</ecNumber>
    </recommendedName>
    <alternativeName>
        <fullName evidence="1">Nucleoside-2-P kinase</fullName>
    </alternativeName>
</protein>